<gene>
    <name evidence="1" type="primary">pfkA</name>
    <name type="ordered locus">VV3110</name>
</gene>
<accession>Q7MGW6</accession>
<sequence length="320" mass="34470">MIKKIGVLTSGGDAPGMNAAIRGVVRTALGAGLEVYGIYDGYLGLYEGRIKQLDRSSVSDVINRGGTFLGSARFPEFKEVAVREKAIENLKAHGIDALVVIGGDGSYMGAKKLTEMGYPCIGLPGTIDNDIAGTDYTIGYLTALNTVIESIDRLRDTSSSHQRISIVEIMGRHCGDLTLMSAIAGGCEYIITPETGLDKEKLIGNIQDGISKGKKHAIIALTELMMDANELAKEIEAGTGRETRATVLGHIQRGGRPTAFDRVLASRMGNYAVHLLMEGHGGRCVGIVKEQLVHHDIIDAIENMKRPVRNDLFKVAEELF</sequence>
<dbReference type="EC" id="2.7.1.11" evidence="1"/>
<dbReference type="EMBL" id="BA000037">
    <property type="protein sequence ID" value="BAC95874.1"/>
    <property type="status" value="ALT_INIT"/>
    <property type="molecule type" value="Genomic_DNA"/>
</dbReference>
<dbReference type="RefSeq" id="WP_011079242.1">
    <property type="nucleotide sequence ID" value="NC_005139.1"/>
</dbReference>
<dbReference type="SMR" id="Q7MGW6"/>
<dbReference type="STRING" id="672.VV93_v1c28320"/>
<dbReference type="KEGG" id="vvy:VV3110"/>
<dbReference type="eggNOG" id="COG0205">
    <property type="taxonomic scope" value="Bacteria"/>
</dbReference>
<dbReference type="HOGENOM" id="CLU_020655_0_1_6"/>
<dbReference type="UniPathway" id="UPA00109">
    <property type="reaction ID" value="UER00182"/>
</dbReference>
<dbReference type="Proteomes" id="UP000002675">
    <property type="component" value="Chromosome I"/>
</dbReference>
<dbReference type="GO" id="GO:0005945">
    <property type="term" value="C:6-phosphofructokinase complex"/>
    <property type="evidence" value="ECO:0007669"/>
    <property type="project" value="TreeGrafter"/>
</dbReference>
<dbReference type="GO" id="GO:0003872">
    <property type="term" value="F:6-phosphofructokinase activity"/>
    <property type="evidence" value="ECO:0007669"/>
    <property type="project" value="UniProtKB-UniRule"/>
</dbReference>
<dbReference type="GO" id="GO:0016208">
    <property type="term" value="F:AMP binding"/>
    <property type="evidence" value="ECO:0007669"/>
    <property type="project" value="TreeGrafter"/>
</dbReference>
<dbReference type="GO" id="GO:0005524">
    <property type="term" value="F:ATP binding"/>
    <property type="evidence" value="ECO:0007669"/>
    <property type="project" value="UniProtKB-KW"/>
</dbReference>
<dbReference type="GO" id="GO:0070095">
    <property type="term" value="F:fructose-6-phosphate binding"/>
    <property type="evidence" value="ECO:0007669"/>
    <property type="project" value="TreeGrafter"/>
</dbReference>
<dbReference type="GO" id="GO:0042802">
    <property type="term" value="F:identical protein binding"/>
    <property type="evidence" value="ECO:0007669"/>
    <property type="project" value="TreeGrafter"/>
</dbReference>
<dbReference type="GO" id="GO:0046872">
    <property type="term" value="F:metal ion binding"/>
    <property type="evidence" value="ECO:0007669"/>
    <property type="project" value="UniProtKB-KW"/>
</dbReference>
<dbReference type="GO" id="GO:0048029">
    <property type="term" value="F:monosaccharide binding"/>
    <property type="evidence" value="ECO:0007669"/>
    <property type="project" value="TreeGrafter"/>
</dbReference>
<dbReference type="GO" id="GO:0061621">
    <property type="term" value="P:canonical glycolysis"/>
    <property type="evidence" value="ECO:0007669"/>
    <property type="project" value="TreeGrafter"/>
</dbReference>
<dbReference type="GO" id="GO:0030388">
    <property type="term" value="P:fructose 1,6-bisphosphate metabolic process"/>
    <property type="evidence" value="ECO:0007669"/>
    <property type="project" value="TreeGrafter"/>
</dbReference>
<dbReference type="GO" id="GO:0006002">
    <property type="term" value="P:fructose 6-phosphate metabolic process"/>
    <property type="evidence" value="ECO:0007669"/>
    <property type="project" value="InterPro"/>
</dbReference>
<dbReference type="CDD" id="cd00763">
    <property type="entry name" value="Bacterial_PFK"/>
    <property type="match status" value="1"/>
</dbReference>
<dbReference type="FunFam" id="3.40.50.450:FF:000001">
    <property type="entry name" value="ATP-dependent 6-phosphofructokinase"/>
    <property type="match status" value="1"/>
</dbReference>
<dbReference type="FunFam" id="3.40.50.460:FF:000002">
    <property type="entry name" value="ATP-dependent 6-phosphofructokinase"/>
    <property type="match status" value="1"/>
</dbReference>
<dbReference type="Gene3D" id="3.40.50.450">
    <property type="match status" value="1"/>
</dbReference>
<dbReference type="Gene3D" id="3.40.50.460">
    <property type="entry name" value="Phosphofructokinase domain"/>
    <property type="match status" value="1"/>
</dbReference>
<dbReference type="HAMAP" id="MF_00339">
    <property type="entry name" value="Phosphofructokinase_I_B1"/>
    <property type="match status" value="1"/>
</dbReference>
<dbReference type="InterPro" id="IPR022953">
    <property type="entry name" value="ATP_PFK"/>
</dbReference>
<dbReference type="InterPro" id="IPR012003">
    <property type="entry name" value="ATP_PFK_prok-type"/>
</dbReference>
<dbReference type="InterPro" id="IPR012828">
    <property type="entry name" value="PFKA_ATP_prok"/>
</dbReference>
<dbReference type="InterPro" id="IPR015912">
    <property type="entry name" value="Phosphofructokinase_CS"/>
</dbReference>
<dbReference type="InterPro" id="IPR000023">
    <property type="entry name" value="Phosphofructokinase_dom"/>
</dbReference>
<dbReference type="InterPro" id="IPR035966">
    <property type="entry name" value="PKF_sf"/>
</dbReference>
<dbReference type="NCBIfam" id="TIGR02482">
    <property type="entry name" value="PFKA_ATP"/>
    <property type="match status" value="1"/>
</dbReference>
<dbReference type="NCBIfam" id="NF002872">
    <property type="entry name" value="PRK03202.1"/>
    <property type="match status" value="1"/>
</dbReference>
<dbReference type="PANTHER" id="PTHR13697:SF4">
    <property type="entry name" value="ATP-DEPENDENT 6-PHOSPHOFRUCTOKINASE"/>
    <property type="match status" value="1"/>
</dbReference>
<dbReference type="PANTHER" id="PTHR13697">
    <property type="entry name" value="PHOSPHOFRUCTOKINASE"/>
    <property type="match status" value="1"/>
</dbReference>
<dbReference type="Pfam" id="PF00365">
    <property type="entry name" value="PFK"/>
    <property type="match status" value="1"/>
</dbReference>
<dbReference type="PIRSF" id="PIRSF000532">
    <property type="entry name" value="ATP_PFK_prok"/>
    <property type="match status" value="1"/>
</dbReference>
<dbReference type="PRINTS" id="PR00476">
    <property type="entry name" value="PHFRCTKINASE"/>
</dbReference>
<dbReference type="SUPFAM" id="SSF53784">
    <property type="entry name" value="Phosphofructokinase"/>
    <property type="match status" value="1"/>
</dbReference>
<dbReference type="PROSITE" id="PS00433">
    <property type="entry name" value="PHOSPHOFRUCTOKINASE"/>
    <property type="match status" value="1"/>
</dbReference>
<comment type="function">
    <text evidence="1">Catalyzes the phosphorylation of D-fructose 6-phosphate to fructose 1,6-bisphosphate by ATP, the first committing step of glycolysis.</text>
</comment>
<comment type="catalytic activity">
    <reaction evidence="1">
        <text>beta-D-fructose 6-phosphate + ATP = beta-D-fructose 1,6-bisphosphate + ADP + H(+)</text>
        <dbReference type="Rhea" id="RHEA:16109"/>
        <dbReference type="ChEBI" id="CHEBI:15378"/>
        <dbReference type="ChEBI" id="CHEBI:30616"/>
        <dbReference type="ChEBI" id="CHEBI:32966"/>
        <dbReference type="ChEBI" id="CHEBI:57634"/>
        <dbReference type="ChEBI" id="CHEBI:456216"/>
        <dbReference type="EC" id="2.7.1.11"/>
    </reaction>
</comment>
<comment type="cofactor">
    <cofactor evidence="1">
        <name>Mg(2+)</name>
        <dbReference type="ChEBI" id="CHEBI:18420"/>
    </cofactor>
</comment>
<comment type="activity regulation">
    <text evidence="1">Allosterically activated by ADP and other diphosphonucleosides, and allosterically inhibited by phosphoenolpyruvate.</text>
</comment>
<comment type="pathway">
    <text evidence="1">Carbohydrate degradation; glycolysis; D-glyceraldehyde 3-phosphate and glycerone phosphate from D-glucose: step 3/4.</text>
</comment>
<comment type="subunit">
    <text evidence="1">Homotetramer.</text>
</comment>
<comment type="subcellular location">
    <subcellularLocation>
        <location evidence="1">Cytoplasm</location>
    </subcellularLocation>
</comment>
<comment type="similarity">
    <text evidence="1">Belongs to the phosphofructokinase type A (PFKA) family. ATP-dependent PFK group I subfamily. Prokaryotic clade 'B1' sub-subfamily.</text>
</comment>
<comment type="sequence caution" evidence="2">
    <conflict type="erroneous initiation">
        <sequence resource="EMBL-CDS" id="BAC95874"/>
    </conflict>
</comment>
<reference key="1">
    <citation type="journal article" date="2003" name="Genome Res.">
        <title>Comparative genome analysis of Vibrio vulnificus, a marine pathogen.</title>
        <authorList>
            <person name="Chen C.-Y."/>
            <person name="Wu K.-M."/>
            <person name="Chang Y.-C."/>
            <person name="Chang C.-H."/>
            <person name="Tsai H.-C."/>
            <person name="Liao T.-L."/>
            <person name="Liu Y.-M."/>
            <person name="Chen H.-J."/>
            <person name="Shen A.B.-T."/>
            <person name="Li J.-C."/>
            <person name="Su T.-L."/>
            <person name="Shao C.-P."/>
            <person name="Lee C.-T."/>
            <person name="Hor L.-I."/>
            <person name="Tsai S.-F."/>
        </authorList>
    </citation>
    <scope>NUCLEOTIDE SEQUENCE [LARGE SCALE GENOMIC DNA]</scope>
    <source>
        <strain>YJ016</strain>
    </source>
</reference>
<organism>
    <name type="scientific">Vibrio vulnificus (strain YJ016)</name>
    <dbReference type="NCBI Taxonomy" id="196600"/>
    <lineage>
        <taxon>Bacteria</taxon>
        <taxon>Pseudomonadati</taxon>
        <taxon>Pseudomonadota</taxon>
        <taxon>Gammaproteobacteria</taxon>
        <taxon>Vibrionales</taxon>
        <taxon>Vibrionaceae</taxon>
        <taxon>Vibrio</taxon>
    </lineage>
</organism>
<proteinExistence type="inferred from homology"/>
<evidence type="ECO:0000255" key="1">
    <source>
        <dbReference type="HAMAP-Rule" id="MF_00339"/>
    </source>
</evidence>
<evidence type="ECO:0000305" key="2"/>
<feature type="chain" id="PRO_0000112008" description="ATP-dependent 6-phosphofructokinase">
    <location>
        <begin position="1"/>
        <end position="320"/>
    </location>
</feature>
<feature type="active site" description="Proton acceptor" evidence="1">
    <location>
        <position position="128"/>
    </location>
</feature>
<feature type="binding site" evidence="1">
    <location>
        <position position="12"/>
    </location>
    <ligand>
        <name>ATP</name>
        <dbReference type="ChEBI" id="CHEBI:30616"/>
    </ligand>
</feature>
<feature type="binding site" evidence="1">
    <location>
        <begin position="22"/>
        <end position="26"/>
    </location>
    <ligand>
        <name>ADP</name>
        <dbReference type="ChEBI" id="CHEBI:456216"/>
        <note>allosteric activator; ligand shared between dimeric partners</note>
    </ligand>
</feature>
<feature type="binding site" evidence="1">
    <location>
        <begin position="73"/>
        <end position="74"/>
    </location>
    <ligand>
        <name>ATP</name>
        <dbReference type="ChEBI" id="CHEBI:30616"/>
    </ligand>
</feature>
<feature type="binding site" evidence="1">
    <location>
        <begin position="103"/>
        <end position="106"/>
    </location>
    <ligand>
        <name>ATP</name>
        <dbReference type="ChEBI" id="CHEBI:30616"/>
    </ligand>
</feature>
<feature type="binding site" evidence="1">
    <location>
        <position position="104"/>
    </location>
    <ligand>
        <name>Mg(2+)</name>
        <dbReference type="ChEBI" id="CHEBI:18420"/>
        <note>catalytic</note>
    </ligand>
</feature>
<feature type="binding site" description="in other chain" evidence="1">
    <location>
        <begin position="126"/>
        <end position="128"/>
    </location>
    <ligand>
        <name>substrate</name>
        <note>ligand shared between dimeric partners</note>
    </ligand>
</feature>
<feature type="binding site" description="in other chain" evidence="1">
    <location>
        <position position="155"/>
    </location>
    <ligand>
        <name>ADP</name>
        <dbReference type="ChEBI" id="CHEBI:456216"/>
        <note>allosteric activator; ligand shared between dimeric partners</note>
    </ligand>
</feature>
<feature type="binding site" evidence="1">
    <location>
        <position position="163"/>
    </location>
    <ligand>
        <name>substrate</name>
        <note>ligand shared between dimeric partners</note>
    </ligand>
</feature>
<feature type="binding site" description="in other chain" evidence="1">
    <location>
        <begin position="170"/>
        <end position="172"/>
    </location>
    <ligand>
        <name>substrate</name>
        <note>ligand shared between dimeric partners</note>
    </ligand>
</feature>
<feature type="binding site" description="in other chain" evidence="1">
    <location>
        <begin position="186"/>
        <end position="188"/>
    </location>
    <ligand>
        <name>ADP</name>
        <dbReference type="ChEBI" id="CHEBI:456216"/>
        <note>allosteric activator; ligand shared between dimeric partners</note>
    </ligand>
</feature>
<feature type="binding site" description="in other chain" evidence="1">
    <location>
        <position position="212"/>
    </location>
    <ligand>
        <name>ADP</name>
        <dbReference type="ChEBI" id="CHEBI:456216"/>
        <note>allosteric activator; ligand shared between dimeric partners</note>
    </ligand>
</feature>
<feature type="binding site" description="in other chain" evidence="1">
    <location>
        <begin position="214"/>
        <end position="216"/>
    </location>
    <ligand>
        <name>ADP</name>
        <dbReference type="ChEBI" id="CHEBI:456216"/>
        <note>allosteric activator; ligand shared between dimeric partners</note>
    </ligand>
</feature>
<feature type="binding site" description="in other chain" evidence="1">
    <location>
        <position position="223"/>
    </location>
    <ligand>
        <name>substrate</name>
        <note>ligand shared between dimeric partners</note>
    </ligand>
</feature>
<feature type="binding site" evidence="1">
    <location>
        <position position="244"/>
    </location>
    <ligand>
        <name>substrate</name>
        <note>ligand shared between dimeric partners</note>
    </ligand>
</feature>
<feature type="binding site" description="in other chain" evidence="1">
    <location>
        <begin position="250"/>
        <end position="253"/>
    </location>
    <ligand>
        <name>substrate</name>
        <note>ligand shared between dimeric partners</note>
    </ligand>
</feature>
<protein>
    <recommendedName>
        <fullName evidence="1">ATP-dependent 6-phosphofructokinase</fullName>
        <shortName evidence="1">ATP-PFK</shortName>
        <shortName evidence="1">Phosphofructokinase</shortName>
        <ecNumber evidence="1">2.7.1.11</ecNumber>
    </recommendedName>
    <alternativeName>
        <fullName evidence="1">Phosphohexokinase</fullName>
    </alternativeName>
</protein>
<keyword id="KW-0021">Allosteric enzyme</keyword>
<keyword id="KW-0067">ATP-binding</keyword>
<keyword id="KW-0963">Cytoplasm</keyword>
<keyword id="KW-0324">Glycolysis</keyword>
<keyword id="KW-0418">Kinase</keyword>
<keyword id="KW-0460">Magnesium</keyword>
<keyword id="KW-0479">Metal-binding</keyword>
<keyword id="KW-0547">Nucleotide-binding</keyword>
<keyword id="KW-0808">Transferase</keyword>
<name>PFKA_VIBVY</name>